<gene>
    <name evidence="1" type="primary">hemA</name>
    <name type="ordered locus">Sbal_0695</name>
</gene>
<evidence type="ECO:0000255" key="1">
    <source>
        <dbReference type="HAMAP-Rule" id="MF_00087"/>
    </source>
</evidence>
<accession>A3D0G0</accession>
<name>HEM1_SHEB5</name>
<comment type="function">
    <text evidence="1">Catalyzes the NADPH-dependent reduction of glutamyl-tRNA(Glu) to glutamate 1-semialdehyde (GSA).</text>
</comment>
<comment type="catalytic activity">
    <reaction evidence="1">
        <text>(S)-4-amino-5-oxopentanoate + tRNA(Glu) + NADP(+) = L-glutamyl-tRNA(Glu) + NADPH + H(+)</text>
        <dbReference type="Rhea" id="RHEA:12344"/>
        <dbReference type="Rhea" id="RHEA-COMP:9663"/>
        <dbReference type="Rhea" id="RHEA-COMP:9680"/>
        <dbReference type="ChEBI" id="CHEBI:15378"/>
        <dbReference type="ChEBI" id="CHEBI:57501"/>
        <dbReference type="ChEBI" id="CHEBI:57783"/>
        <dbReference type="ChEBI" id="CHEBI:58349"/>
        <dbReference type="ChEBI" id="CHEBI:78442"/>
        <dbReference type="ChEBI" id="CHEBI:78520"/>
        <dbReference type="EC" id="1.2.1.70"/>
    </reaction>
</comment>
<comment type="pathway">
    <text evidence="1">Porphyrin-containing compound metabolism; protoporphyrin-IX biosynthesis; 5-aminolevulinate from L-glutamyl-tRNA(Glu): step 1/2.</text>
</comment>
<comment type="subunit">
    <text evidence="1">Homodimer.</text>
</comment>
<comment type="domain">
    <text evidence="1">Possesses an unusual extended V-shaped dimeric structure with each monomer consisting of three distinct domains arranged along a curved 'spinal' alpha-helix. The N-terminal catalytic domain specifically recognizes the glutamate moiety of the substrate. The second domain is the NADPH-binding domain, and the third C-terminal domain is responsible for dimerization.</text>
</comment>
<comment type="miscellaneous">
    <text evidence="1">During catalysis, the active site Cys acts as a nucleophile attacking the alpha-carbonyl group of tRNA-bound glutamate with the formation of a thioester intermediate between enzyme and glutamate, and the concomitant release of tRNA(Glu). The thioester intermediate is finally reduced by direct hydride transfer from NADPH, to form the product GSA.</text>
</comment>
<comment type="similarity">
    <text evidence="1">Belongs to the glutamyl-tRNA reductase family.</text>
</comment>
<proteinExistence type="inferred from homology"/>
<organism>
    <name type="scientific">Shewanella baltica (strain OS155 / ATCC BAA-1091)</name>
    <dbReference type="NCBI Taxonomy" id="325240"/>
    <lineage>
        <taxon>Bacteria</taxon>
        <taxon>Pseudomonadati</taxon>
        <taxon>Pseudomonadota</taxon>
        <taxon>Gammaproteobacteria</taxon>
        <taxon>Alteromonadales</taxon>
        <taxon>Shewanellaceae</taxon>
        <taxon>Shewanella</taxon>
    </lineage>
</organism>
<feature type="chain" id="PRO_1000004686" description="Glutamyl-tRNA reductase">
    <location>
        <begin position="1"/>
        <end position="416"/>
    </location>
</feature>
<feature type="active site" description="Nucleophile" evidence="1">
    <location>
        <position position="50"/>
    </location>
</feature>
<feature type="binding site" evidence="1">
    <location>
        <begin position="49"/>
        <end position="52"/>
    </location>
    <ligand>
        <name>substrate</name>
    </ligand>
</feature>
<feature type="binding site" evidence="1">
    <location>
        <position position="105"/>
    </location>
    <ligand>
        <name>substrate</name>
    </ligand>
</feature>
<feature type="binding site" evidence="1">
    <location>
        <begin position="110"/>
        <end position="112"/>
    </location>
    <ligand>
        <name>substrate</name>
    </ligand>
</feature>
<feature type="binding site" evidence="1">
    <location>
        <position position="116"/>
    </location>
    <ligand>
        <name>substrate</name>
    </ligand>
</feature>
<feature type="binding site" evidence="1">
    <location>
        <begin position="185"/>
        <end position="190"/>
    </location>
    <ligand>
        <name>NADP(+)</name>
        <dbReference type="ChEBI" id="CHEBI:58349"/>
    </ligand>
</feature>
<feature type="site" description="Important for activity" evidence="1">
    <location>
        <position position="95"/>
    </location>
</feature>
<protein>
    <recommendedName>
        <fullName evidence="1">Glutamyl-tRNA reductase</fullName>
        <shortName evidence="1">GluTR</shortName>
        <ecNumber evidence="1">1.2.1.70</ecNumber>
    </recommendedName>
</protein>
<dbReference type="EC" id="1.2.1.70" evidence="1"/>
<dbReference type="EMBL" id="CP000563">
    <property type="protein sequence ID" value="ABN60223.1"/>
    <property type="molecule type" value="Genomic_DNA"/>
</dbReference>
<dbReference type="RefSeq" id="WP_006084077.1">
    <property type="nucleotide sequence ID" value="NC_009052.1"/>
</dbReference>
<dbReference type="SMR" id="A3D0G0"/>
<dbReference type="STRING" id="325240.Sbal_0695"/>
<dbReference type="GeneID" id="11774974"/>
<dbReference type="KEGG" id="sbl:Sbal_0695"/>
<dbReference type="HOGENOM" id="CLU_035113_2_2_6"/>
<dbReference type="OrthoDB" id="110209at2"/>
<dbReference type="UniPathway" id="UPA00251">
    <property type="reaction ID" value="UER00316"/>
</dbReference>
<dbReference type="Proteomes" id="UP000001557">
    <property type="component" value="Chromosome"/>
</dbReference>
<dbReference type="GO" id="GO:0008883">
    <property type="term" value="F:glutamyl-tRNA reductase activity"/>
    <property type="evidence" value="ECO:0007669"/>
    <property type="project" value="UniProtKB-UniRule"/>
</dbReference>
<dbReference type="GO" id="GO:0050661">
    <property type="term" value="F:NADP binding"/>
    <property type="evidence" value="ECO:0007669"/>
    <property type="project" value="InterPro"/>
</dbReference>
<dbReference type="GO" id="GO:0019353">
    <property type="term" value="P:protoporphyrinogen IX biosynthetic process from glutamate"/>
    <property type="evidence" value="ECO:0007669"/>
    <property type="project" value="TreeGrafter"/>
</dbReference>
<dbReference type="CDD" id="cd05213">
    <property type="entry name" value="NAD_bind_Glutamyl_tRNA_reduct"/>
    <property type="match status" value="1"/>
</dbReference>
<dbReference type="FunFam" id="3.30.460.30:FF:000001">
    <property type="entry name" value="Glutamyl-tRNA reductase"/>
    <property type="match status" value="1"/>
</dbReference>
<dbReference type="FunFam" id="3.40.50.720:FF:000031">
    <property type="entry name" value="Glutamyl-tRNA reductase"/>
    <property type="match status" value="1"/>
</dbReference>
<dbReference type="Gene3D" id="3.30.460.30">
    <property type="entry name" value="Glutamyl-tRNA reductase, N-terminal domain"/>
    <property type="match status" value="1"/>
</dbReference>
<dbReference type="Gene3D" id="3.40.50.720">
    <property type="entry name" value="NAD(P)-binding Rossmann-like Domain"/>
    <property type="match status" value="1"/>
</dbReference>
<dbReference type="HAMAP" id="MF_00087">
    <property type="entry name" value="Glu_tRNA_reductase"/>
    <property type="match status" value="1"/>
</dbReference>
<dbReference type="InterPro" id="IPR000343">
    <property type="entry name" value="4pyrrol_synth_GluRdtase"/>
</dbReference>
<dbReference type="InterPro" id="IPR015896">
    <property type="entry name" value="4pyrrol_synth_GluRdtase_dimer"/>
</dbReference>
<dbReference type="InterPro" id="IPR015895">
    <property type="entry name" value="4pyrrol_synth_GluRdtase_N"/>
</dbReference>
<dbReference type="InterPro" id="IPR018214">
    <property type="entry name" value="GluRdtase_CS"/>
</dbReference>
<dbReference type="InterPro" id="IPR036453">
    <property type="entry name" value="GluRdtase_dimer_dom_sf"/>
</dbReference>
<dbReference type="InterPro" id="IPR036343">
    <property type="entry name" value="GluRdtase_N_sf"/>
</dbReference>
<dbReference type="InterPro" id="IPR036291">
    <property type="entry name" value="NAD(P)-bd_dom_sf"/>
</dbReference>
<dbReference type="InterPro" id="IPR006151">
    <property type="entry name" value="Shikm_DH/Glu-tRNA_Rdtase"/>
</dbReference>
<dbReference type="NCBIfam" id="TIGR01035">
    <property type="entry name" value="hemA"/>
    <property type="match status" value="1"/>
</dbReference>
<dbReference type="PANTHER" id="PTHR43013">
    <property type="entry name" value="GLUTAMYL-TRNA REDUCTASE"/>
    <property type="match status" value="1"/>
</dbReference>
<dbReference type="PANTHER" id="PTHR43013:SF1">
    <property type="entry name" value="GLUTAMYL-TRNA REDUCTASE"/>
    <property type="match status" value="1"/>
</dbReference>
<dbReference type="Pfam" id="PF00745">
    <property type="entry name" value="GlutR_dimer"/>
    <property type="match status" value="1"/>
</dbReference>
<dbReference type="Pfam" id="PF05201">
    <property type="entry name" value="GlutR_N"/>
    <property type="match status" value="1"/>
</dbReference>
<dbReference type="Pfam" id="PF01488">
    <property type="entry name" value="Shikimate_DH"/>
    <property type="match status" value="1"/>
</dbReference>
<dbReference type="PIRSF" id="PIRSF000445">
    <property type="entry name" value="4pyrrol_synth_GluRdtase"/>
    <property type="match status" value="1"/>
</dbReference>
<dbReference type="SUPFAM" id="SSF69742">
    <property type="entry name" value="Glutamyl tRNA-reductase catalytic, N-terminal domain"/>
    <property type="match status" value="1"/>
</dbReference>
<dbReference type="SUPFAM" id="SSF69075">
    <property type="entry name" value="Glutamyl tRNA-reductase dimerization domain"/>
    <property type="match status" value="1"/>
</dbReference>
<dbReference type="SUPFAM" id="SSF51735">
    <property type="entry name" value="NAD(P)-binding Rossmann-fold domains"/>
    <property type="match status" value="1"/>
</dbReference>
<dbReference type="PROSITE" id="PS00747">
    <property type="entry name" value="GLUTR"/>
    <property type="match status" value="1"/>
</dbReference>
<reference key="1">
    <citation type="submission" date="2007-02" db="EMBL/GenBank/DDBJ databases">
        <title>Complete sequence of chromosome of Shewanella baltica OS155.</title>
        <authorList>
            <consortium name="US DOE Joint Genome Institute"/>
            <person name="Copeland A."/>
            <person name="Lucas S."/>
            <person name="Lapidus A."/>
            <person name="Barry K."/>
            <person name="Detter J.C."/>
            <person name="Glavina del Rio T."/>
            <person name="Hammon N."/>
            <person name="Israni S."/>
            <person name="Dalin E."/>
            <person name="Tice H."/>
            <person name="Pitluck S."/>
            <person name="Sims D.R."/>
            <person name="Brettin T."/>
            <person name="Bruce D."/>
            <person name="Han C."/>
            <person name="Tapia R."/>
            <person name="Brainard J."/>
            <person name="Schmutz J."/>
            <person name="Larimer F."/>
            <person name="Land M."/>
            <person name="Hauser L."/>
            <person name="Kyrpides N."/>
            <person name="Mikhailova N."/>
            <person name="Brettar I."/>
            <person name="Klappenbach J."/>
            <person name="Konstantinidis K."/>
            <person name="Rodrigues J."/>
            <person name="Tiedje J."/>
            <person name="Richardson P."/>
        </authorList>
    </citation>
    <scope>NUCLEOTIDE SEQUENCE [LARGE SCALE GENOMIC DNA]</scope>
    <source>
        <strain>OS155 / ATCC BAA-1091</strain>
    </source>
</reference>
<sequence length="416" mass="45444">MSLVAIGINHKTATVDLREKVAFSPDKIHDAMKSLASRTRSGEAVIVSTCNRTELYCNNGDEADIIAWLEEYHGLDHKDVAPCLYNYHGQDAVRHLMRVASGLDSLILGEPQILGQVKQAFVKAKEAGTVALTIDRLFQNTFSVAKKVRTDTEIGAAAVSVAFAAVSMAKHIFSSISTTKVLLIGAGETIELVAKHLKDNGVASMVVANRTLERAQGMCEEFGATAITLAQIPDYLPKADIVISSTASPLPILGKGMVEKALKQRRHQPMLLVDIAVPRDIEPEVADLDDAFLYTVDDLHSIIEQNMASRKEAAEQAEVITEEQSFLFMDWIRSLESVDSIREYRSQSMAVKDELVERALNKLAQGSDTEQVLIELANRLTNKLIHAPTQALTAASRQGDLNTLGQLRSALGLDKN</sequence>
<keyword id="KW-0521">NADP</keyword>
<keyword id="KW-0560">Oxidoreductase</keyword>
<keyword id="KW-0627">Porphyrin biosynthesis</keyword>
<keyword id="KW-1185">Reference proteome</keyword>